<evidence type="ECO:0000255" key="1">
    <source>
        <dbReference type="HAMAP-Rule" id="MF_00451"/>
    </source>
</evidence>
<sequence length="141" mass="15541">MAVERTLSIIKPDAVAKNVIGQIYARFEAAGLKVVAARMAHLSRVEAENFYAIHRERPFFKDLVEFMISGPVMIQVLEGENAIARNRELMGATDPRKAEKGTIRADFAESIDANAVHGSDAPETAVVEIACFFPSLEIHSR</sequence>
<reference key="1">
    <citation type="journal article" date="2003" name="J. Bacteriol.">
        <title>Complete genome sequence of the ammonia-oxidizing bacterium and obligate chemolithoautotroph Nitrosomonas europaea.</title>
        <authorList>
            <person name="Chain P."/>
            <person name="Lamerdin J.E."/>
            <person name="Larimer F.W."/>
            <person name="Regala W."/>
            <person name="Lao V."/>
            <person name="Land M.L."/>
            <person name="Hauser L."/>
            <person name="Hooper A.B."/>
            <person name="Klotz M.G."/>
            <person name="Norton J."/>
            <person name="Sayavedra-Soto L.A."/>
            <person name="Arciero D.M."/>
            <person name="Hommes N.G."/>
            <person name="Whittaker M.M."/>
            <person name="Arp D.J."/>
        </authorList>
    </citation>
    <scope>NUCLEOTIDE SEQUENCE [LARGE SCALE GENOMIC DNA]</scope>
    <source>
        <strain>ATCC 19718 / CIP 103999 / KCTC 2705 / NBRC 14298</strain>
    </source>
</reference>
<proteinExistence type="inferred from homology"/>
<name>NDK_NITEU</name>
<comment type="function">
    <text evidence="1">Major role in the synthesis of nucleoside triphosphates other than ATP. The ATP gamma phosphate is transferred to the NDP beta phosphate via a ping-pong mechanism, using a phosphorylated active-site intermediate.</text>
</comment>
<comment type="catalytic activity">
    <reaction evidence="1">
        <text>a 2'-deoxyribonucleoside 5'-diphosphate + ATP = a 2'-deoxyribonucleoside 5'-triphosphate + ADP</text>
        <dbReference type="Rhea" id="RHEA:44640"/>
        <dbReference type="ChEBI" id="CHEBI:30616"/>
        <dbReference type="ChEBI" id="CHEBI:61560"/>
        <dbReference type="ChEBI" id="CHEBI:73316"/>
        <dbReference type="ChEBI" id="CHEBI:456216"/>
        <dbReference type="EC" id="2.7.4.6"/>
    </reaction>
</comment>
<comment type="catalytic activity">
    <reaction evidence="1">
        <text>a ribonucleoside 5'-diphosphate + ATP = a ribonucleoside 5'-triphosphate + ADP</text>
        <dbReference type="Rhea" id="RHEA:18113"/>
        <dbReference type="ChEBI" id="CHEBI:30616"/>
        <dbReference type="ChEBI" id="CHEBI:57930"/>
        <dbReference type="ChEBI" id="CHEBI:61557"/>
        <dbReference type="ChEBI" id="CHEBI:456216"/>
        <dbReference type="EC" id="2.7.4.6"/>
    </reaction>
</comment>
<comment type="cofactor">
    <cofactor evidence="1">
        <name>Mg(2+)</name>
        <dbReference type="ChEBI" id="CHEBI:18420"/>
    </cofactor>
</comment>
<comment type="subunit">
    <text evidence="1">Homotetramer.</text>
</comment>
<comment type="subcellular location">
    <subcellularLocation>
        <location evidence="1">Cytoplasm</location>
    </subcellularLocation>
</comment>
<comment type="similarity">
    <text evidence="1">Belongs to the NDK family.</text>
</comment>
<accession>Q82XV5</accession>
<keyword id="KW-0067">ATP-binding</keyword>
<keyword id="KW-0963">Cytoplasm</keyword>
<keyword id="KW-0418">Kinase</keyword>
<keyword id="KW-0460">Magnesium</keyword>
<keyword id="KW-0479">Metal-binding</keyword>
<keyword id="KW-0546">Nucleotide metabolism</keyword>
<keyword id="KW-0547">Nucleotide-binding</keyword>
<keyword id="KW-0597">Phosphoprotein</keyword>
<keyword id="KW-1185">Reference proteome</keyword>
<keyword id="KW-0808">Transferase</keyword>
<feature type="chain" id="PRO_0000137014" description="Nucleoside diphosphate kinase">
    <location>
        <begin position="1"/>
        <end position="141"/>
    </location>
</feature>
<feature type="active site" description="Pros-phosphohistidine intermediate" evidence="1">
    <location>
        <position position="117"/>
    </location>
</feature>
<feature type="binding site" evidence="1">
    <location>
        <position position="11"/>
    </location>
    <ligand>
        <name>ATP</name>
        <dbReference type="ChEBI" id="CHEBI:30616"/>
    </ligand>
</feature>
<feature type="binding site" evidence="1">
    <location>
        <position position="59"/>
    </location>
    <ligand>
        <name>ATP</name>
        <dbReference type="ChEBI" id="CHEBI:30616"/>
    </ligand>
</feature>
<feature type="binding site" evidence="1">
    <location>
        <position position="87"/>
    </location>
    <ligand>
        <name>ATP</name>
        <dbReference type="ChEBI" id="CHEBI:30616"/>
    </ligand>
</feature>
<feature type="binding site" evidence="1">
    <location>
        <position position="93"/>
    </location>
    <ligand>
        <name>ATP</name>
        <dbReference type="ChEBI" id="CHEBI:30616"/>
    </ligand>
</feature>
<feature type="binding site" evidence="1">
    <location>
        <position position="104"/>
    </location>
    <ligand>
        <name>ATP</name>
        <dbReference type="ChEBI" id="CHEBI:30616"/>
    </ligand>
</feature>
<feature type="binding site" evidence="1">
    <location>
        <position position="114"/>
    </location>
    <ligand>
        <name>ATP</name>
        <dbReference type="ChEBI" id="CHEBI:30616"/>
    </ligand>
</feature>
<protein>
    <recommendedName>
        <fullName evidence="1">Nucleoside diphosphate kinase</fullName>
        <shortName evidence="1">NDK</shortName>
        <shortName evidence="1">NDP kinase</shortName>
        <ecNumber evidence="1">2.7.4.6</ecNumber>
    </recommendedName>
    <alternativeName>
        <fullName evidence="1">Nucleoside-2-P kinase</fullName>
    </alternativeName>
</protein>
<organism>
    <name type="scientific">Nitrosomonas europaea (strain ATCC 19718 / CIP 103999 / KCTC 2705 / NBRC 14298)</name>
    <dbReference type="NCBI Taxonomy" id="228410"/>
    <lineage>
        <taxon>Bacteria</taxon>
        <taxon>Pseudomonadati</taxon>
        <taxon>Pseudomonadota</taxon>
        <taxon>Betaproteobacteria</taxon>
        <taxon>Nitrosomonadales</taxon>
        <taxon>Nitrosomonadaceae</taxon>
        <taxon>Nitrosomonas</taxon>
    </lineage>
</organism>
<gene>
    <name evidence="1" type="primary">ndk</name>
    <name type="ordered locus">NE0144</name>
</gene>
<dbReference type="EC" id="2.7.4.6" evidence="1"/>
<dbReference type="EMBL" id="AL954747">
    <property type="protein sequence ID" value="CAD84055.1"/>
    <property type="molecule type" value="Genomic_DNA"/>
</dbReference>
<dbReference type="RefSeq" id="WP_011110791.1">
    <property type="nucleotide sequence ID" value="NC_004757.1"/>
</dbReference>
<dbReference type="SMR" id="Q82XV5"/>
<dbReference type="STRING" id="228410.NE0144"/>
<dbReference type="GeneID" id="87103355"/>
<dbReference type="KEGG" id="neu:NE0144"/>
<dbReference type="eggNOG" id="COG0105">
    <property type="taxonomic scope" value="Bacteria"/>
</dbReference>
<dbReference type="HOGENOM" id="CLU_060216_8_1_4"/>
<dbReference type="OrthoDB" id="9801161at2"/>
<dbReference type="PhylomeDB" id="Q82XV5"/>
<dbReference type="Proteomes" id="UP000001416">
    <property type="component" value="Chromosome"/>
</dbReference>
<dbReference type="GO" id="GO:0005737">
    <property type="term" value="C:cytoplasm"/>
    <property type="evidence" value="ECO:0007669"/>
    <property type="project" value="UniProtKB-SubCell"/>
</dbReference>
<dbReference type="GO" id="GO:0005524">
    <property type="term" value="F:ATP binding"/>
    <property type="evidence" value="ECO:0007669"/>
    <property type="project" value="UniProtKB-UniRule"/>
</dbReference>
<dbReference type="GO" id="GO:0046872">
    <property type="term" value="F:metal ion binding"/>
    <property type="evidence" value="ECO:0007669"/>
    <property type="project" value="UniProtKB-KW"/>
</dbReference>
<dbReference type="GO" id="GO:0004550">
    <property type="term" value="F:nucleoside diphosphate kinase activity"/>
    <property type="evidence" value="ECO:0007669"/>
    <property type="project" value="UniProtKB-UniRule"/>
</dbReference>
<dbReference type="GO" id="GO:0006241">
    <property type="term" value="P:CTP biosynthetic process"/>
    <property type="evidence" value="ECO:0007669"/>
    <property type="project" value="UniProtKB-UniRule"/>
</dbReference>
<dbReference type="GO" id="GO:0006183">
    <property type="term" value="P:GTP biosynthetic process"/>
    <property type="evidence" value="ECO:0007669"/>
    <property type="project" value="UniProtKB-UniRule"/>
</dbReference>
<dbReference type="GO" id="GO:0006228">
    <property type="term" value="P:UTP biosynthetic process"/>
    <property type="evidence" value="ECO:0007669"/>
    <property type="project" value="UniProtKB-UniRule"/>
</dbReference>
<dbReference type="CDD" id="cd04413">
    <property type="entry name" value="NDPk_I"/>
    <property type="match status" value="1"/>
</dbReference>
<dbReference type="FunFam" id="3.30.70.141:FF:000001">
    <property type="entry name" value="Nucleoside diphosphate kinase"/>
    <property type="match status" value="1"/>
</dbReference>
<dbReference type="Gene3D" id="3.30.70.141">
    <property type="entry name" value="Nucleoside diphosphate kinase-like domain"/>
    <property type="match status" value="1"/>
</dbReference>
<dbReference type="HAMAP" id="MF_00451">
    <property type="entry name" value="NDP_kinase"/>
    <property type="match status" value="1"/>
</dbReference>
<dbReference type="InterPro" id="IPR034907">
    <property type="entry name" value="NDK-like_dom"/>
</dbReference>
<dbReference type="InterPro" id="IPR036850">
    <property type="entry name" value="NDK-like_dom_sf"/>
</dbReference>
<dbReference type="InterPro" id="IPR001564">
    <property type="entry name" value="Nucleoside_diP_kinase"/>
</dbReference>
<dbReference type="InterPro" id="IPR023005">
    <property type="entry name" value="Nucleoside_diP_kinase_AS"/>
</dbReference>
<dbReference type="NCBIfam" id="NF001908">
    <property type="entry name" value="PRK00668.1"/>
    <property type="match status" value="1"/>
</dbReference>
<dbReference type="PANTHER" id="PTHR46161">
    <property type="entry name" value="NUCLEOSIDE DIPHOSPHATE KINASE"/>
    <property type="match status" value="1"/>
</dbReference>
<dbReference type="PANTHER" id="PTHR46161:SF3">
    <property type="entry name" value="NUCLEOSIDE DIPHOSPHATE KINASE DDB_G0292928-RELATED"/>
    <property type="match status" value="1"/>
</dbReference>
<dbReference type="Pfam" id="PF00334">
    <property type="entry name" value="NDK"/>
    <property type="match status" value="1"/>
</dbReference>
<dbReference type="PRINTS" id="PR01243">
    <property type="entry name" value="NUCDPKINASE"/>
</dbReference>
<dbReference type="SMART" id="SM00562">
    <property type="entry name" value="NDK"/>
    <property type="match status" value="1"/>
</dbReference>
<dbReference type="SUPFAM" id="SSF54919">
    <property type="entry name" value="Nucleoside diphosphate kinase, NDK"/>
    <property type="match status" value="1"/>
</dbReference>
<dbReference type="PROSITE" id="PS00469">
    <property type="entry name" value="NDPK"/>
    <property type="match status" value="1"/>
</dbReference>
<dbReference type="PROSITE" id="PS51374">
    <property type="entry name" value="NDPK_LIKE"/>
    <property type="match status" value="1"/>
</dbReference>